<dbReference type="EC" id="2.7.7.59" evidence="1"/>
<dbReference type="EC" id="3.1.4.-" evidence="1"/>
<dbReference type="EMBL" id="CP001182">
    <property type="protein sequence ID" value="ACJ41089.1"/>
    <property type="molecule type" value="Genomic_DNA"/>
</dbReference>
<dbReference type="RefSeq" id="WP_000611178.1">
    <property type="nucleotide sequence ID" value="NC_011586.2"/>
</dbReference>
<dbReference type="SMR" id="B7I420"/>
<dbReference type="GeneID" id="92893684"/>
<dbReference type="KEGG" id="abn:AB57_1705"/>
<dbReference type="HOGENOM" id="CLU_012833_0_0_6"/>
<dbReference type="Proteomes" id="UP000007094">
    <property type="component" value="Chromosome"/>
</dbReference>
<dbReference type="GO" id="GO:0008773">
    <property type="term" value="F:[protein-PII] uridylyltransferase activity"/>
    <property type="evidence" value="ECO:0007669"/>
    <property type="project" value="UniProtKB-UniRule"/>
</dbReference>
<dbReference type="GO" id="GO:0008081">
    <property type="term" value="F:phosphoric diester hydrolase activity"/>
    <property type="evidence" value="ECO:0007669"/>
    <property type="project" value="UniProtKB-UniRule"/>
</dbReference>
<dbReference type="GO" id="GO:0006808">
    <property type="term" value="P:regulation of nitrogen utilization"/>
    <property type="evidence" value="ECO:0007669"/>
    <property type="project" value="UniProtKB-UniRule"/>
</dbReference>
<dbReference type="CDD" id="cd04899">
    <property type="entry name" value="ACT_ACR-UUR-like_2"/>
    <property type="match status" value="1"/>
</dbReference>
<dbReference type="CDD" id="cd04900">
    <property type="entry name" value="ACT_UUR-like_1"/>
    <property type="match status" value="1"/>
</dbReference>
<dbReference type="CDD" id="cd00077">
    <property type="entry name" value="HDc"/>
    <property type="match status" value="1"/>
</dbReference>
<dbReference type="CDD" id="cd05401">
    <property type="entry name" value="NT_GlnE_GlnD_like"/>
    <property type="match status" value="1"/>
</dbReference>
<dbReference type="Gene3D" id="1.10.3210.10">
    <property type="entry name" value="Hypothetical protein af1432"/>
    <property type="match status" value="1"/>
</dbReference>
<dbReference type="Gene3D" id="1.20.120.330">
    <property type="entry name" value="Nucleotidyltransferases domain 2"/>
    <property type="match status" value="1"/>
</dbReference>
<dbReference type="HAMAP" id="MF_00277">
    <property type="entry name" value="PII_uridylyl_transf"/>
    <property type="match status" value="1"/>
</dbReference>
<dbReference type="InterPro" id="IPR045865">
    <property type="entry name" value="ACT-like_dom_sf"/>
</dbReference>
<dbReference type="InterPro" id="IPR002912">
    <property type="entry name" value="ACT_dom"/>
</dbReference>
<dbReference type="InterPro" id="IPR003607">
    <property type="entry name" value="HD/PDEase_dom"/>
</dbReference>
<dbReference type="InterPro" id="IPR006674">
    <property type="entry name" value="HD_domain"/>
</dbReference>
<dbReference type="InterPro" id="IPR043519">
    <property type="entry name" value="NT_sf"/>
</dbReference>
<dbReference type="InterPro" id="IPR013546">
    <property type="entry name" value="PII_UdlTrfase/GS_AdlTrfase"/>
</dbReference>
<dbReference type="InterPro" id="IPR002934">
    <property type="entry name" value="Polymerase_NTP_transf_dom"/>
</dbReference>
<dbReference type="InterPro" id="IPR010043">
    <property type="entry name" value="UTase/UR"/>
</dbReference>
<dbReference type="NCBIfam" id="TIGR01693">
    <property type="entry name" value="UTase_glnD"/>
    <property type="match status" value="1"/>
</dbReference>
<dbReference type="PANTHER" id="PTHR47320">
    <property type="entry name" value="BIFUNCTIONAL URIDYLYLTRANSFERASE/URIDYLYL-REMOVING ENZYME"/>
    <property type="match status" value="1"/>
</dbReference>
<dbReference type="PANTHER" id="PTHR47320:SF1">
    <property type="entry name" value="BIFUNCTIONAL URIDYLYLTRANSFERASE_URIDYLYL-REMOVING ENZYME"/>
    <property type="match status" value="1"/>
</dbReference>
<dbReference type="Pfam" id="PF01842">
    <property type="entry name" value="ACT"/>
    <property type="match status" value="1"/>
</dbReference>
<dbReference type="Pfam" id="PF08335">
    <property type="entry name" value="GlnD_UR_UTase"/>
    <property type="match status" value="1"/>
</dbReference>
<dbReference type="Pfam" id="PF01966">
    <property type="entry name" value="HD"/>
    <property type="match status" value="1"/>
</dbReference>
<dbReference type="Pfam" id="PF01909">
    <property type="entry name" value="NTP_transf_2"/>
    <property type="match status" value="1"/>
</dbReference>
<dbReference type="PIRSF" id="PIRSF006288">
    <property type="entry name" value="PII_uridyltransf"/>
    <property type="match status" value="1"/>
</dbReference>
<dbReference type="SMART" id="SM00471">
    <property type="entry name" value="HDc"/>
    <property type="match status" value="1"/>
</dbReference>
<dbReference type="SUPFAM" id="SSF55021">
    <property type="entry name" value="ACT-like"/>
    <property type="match status" value="1"/>
</dbReference>
<dbReference type="SUPFAM" id="SSF109604">
    <property type="entry name" value="HD-domain/PDEase-like"/>
    <property type="match status" value="1"/>
</dbReference>
<dbReference type="SUPFAM" id="SSF81301">
    <property type="entry name" value="Nucleotidyltransferase"/>
    <property type="match status" value="1"/>
</dbReference>
<dbReference type="SUPFAM" id="SSF81593">
    <property type="entry name" value="Nucleotidyltransferase substrate binding subunit/domain"/>
    <property type="match status" value="1"/>
</dbReference>
<dbReference type="PROSITE" id="PS51671">
    <property type="entry name" value="ACT"/>
    <property type="match status" value="2"/>
</dbReference>
<dbReference type="PROSITE" id="PS51831">
    <property type="entry name" value="HD"/>
    <property type="match status" value="1"/>
</dbReference>
<reference key="1">
    <citation type="journal article" date="2008" name="J. Bacteriol.">
        <title>Comparative genome sequence analysis of multidrug-resistant Acinetobacter baumannii.</title>
        <authorList>
            <person name="Adams M.D."/>
            <person name="Goglin K."/>
            <person name="Molyneaux N."/>
            <person name="Hujer K.M."/>
            <person name="Lavender H."/>
            <person name="Jamison J.J."/>
            <person name="MacDonald I.J."/>
            <person name="Martin K.M."/>
            <person name="Russo T."/>
            <person name="Campagnari A.A."/>
            <person name="Hujer A.M."/>
            <person name="Bonomo R.A."/>
            <person name="Gill S.R."/>
        </authorList>
    </citation>
    <scope>NUCLEOTIDE SEQUENCE [LARGE SCALE GENOMIC DNA]</scope>
    <source>
        <strain>AB0057</strain>
    </source>
</reference>
<protein>
    <recommendedName>
        <fullName evidence="1">Bifunctional uridylyltransferase/uridylyl-removing enzyme</fullName>
        <shortName evidence="1">UTase/UR</shortName>
    </recommendedName>
    <alternativeName>
        <fullName evidence="1">Bifunctional [protein-PII] modification enzyme</fullName>
    </alternativeName>
    <alternativeName>
        <fullName evidence="1">Bifunctional nitrogen sensor protein</fullName>
    </alternativeName>
    <domain>
        <recommendedName>
            <fullName evidence="1">[Protein-PII] uridylyltransferase</fullName>
            <shortName evidence="1">PII uridylyltransferase</shortName>
            <shortName evidence="1">UTase</shortName>
            <ecNumber evidence="1">2.7.7.59</ecNumber>
        </recommendedName>
    </domain>
    <domain>
        <recommendedName>
            <fullName evidence="1">[Protein-PII]-UMP uridylyl-removing enzyme</fullName>
            <shortName evidence="1">UR</shortName>
            <ecNumber evidence="1">3.1.4.-</ecNumber>
        </recommendedName>
    </domain>
</protein>
<organism>
    <name type="scientific">Acinetobacter baumannii (strain AB0057)</name>
    <dbReference type="NCBI Taxonomy" id="480119"/>
    <lineage>
        <taxon>Bacteria</taxon>
        <taxon>Pseudomonadati</taxon>
        <taxon>Pseudomonadota</taxon>
        <taxon>Gammaproteobacteria</taxon>
        <taxon>Moraxellales</taxon>
        <taxon>Moraxellaceae</taxon>
        <taxon>Acinetobacter</taxon>
        <taxon>Acinetobacter calcoaceticus/baumannii complex</taxon>
    </lineage>
</organism>
<name>GLND_ACIB5</name>
<gene>
    <name evidence="1" type="primary">glnD</name>
    <name type="ordered locus">AB57_1705</name>
</gene>
<comment type="function">
    <text evidence="1">Modifies, by uridylylation and deuridylylation, the PII regulatory proteins (GlnB and homologs), in response to the nitrogen status of the cell that GlnD senses through the glutamine level. Under low glutamine levels, catalyzes the conversion of the PII proteins and UTP to PII-UMP and PPi, while under higher glutamine levels, GlnD hydrolyzes PII-UMP to PII and UMP (deuridylylation). Thus, controls uridylylation state and activity of the PII proteins, and plays an important role in the regulation of nitrogen assimilation and metabolism.</text>
</comment>
<comment type="catalytic activity">
    <reaction evidence="1">
        <text>[protein-PII]-L-tyrosine + UTP = [protein-PII]-uridylyl-L-tyrosine + diphosphate</text>
        <dbReference type="Rhea" id="RHEA:13673"/>
        <dbReference type="Rhea" id="RHEA-COMP:12147"/>
        <dbReference type="Rhea" id="RHEA-COMP:12148"/>
        <dbReference type="ChEBI" id="CHEBI:33019"/>
        <dbReference type="ChEBI" id="CHEBI:46398"/>
        <dbReference type="ChEBI" id="CHEBI:46858"/>
        <dbReference type="ChEBI" id="CHEBI:90602"/>
        <dbReference type="EC" id="2.7.7.59"/>
    </reaction>
</comment>
<comment type="catalytic activity">
    <reaction evidence="1">
        <text>[protein-PII]-uridylyl-L-tyrosine + H2O = [protein-PII]-L-tyrosine + UMP + H(+)</text>
        <dbReference type="Rhea" id="RHEA:48600"/>
        <dbReference type="Rhea" id="RHEA-COMP:12147"/>
        <dbReference type="Rhea" id="RHEA-COMP:12148"/>
        <dbReference type="ChEBI" id="CHEBI:15377"/>
        <dbReference type="ChEBI" id="CHEBI:15378"/>
        <dbReference type="ChEBI" id="CHEBI:46858"/>
        <dbReference type="ChEBI" id="CHEBI:57865"/>
        <dbReference type="ChEBI" id="CHEBI:90602"/>
    </reaction>
</comment>
<comment type="cofactor">
    <cofactor evidence="1">
        <name>Mg(2+)</name>
        <dbReference type="ChEBI" id="CHEBI:18420"/>
    </cofactor>
</comment>
<comment type="activity regulation">
    <text evidence="1">Uridylyltransferase (UTase) activity is inhibited by glutamine, while glutamine activates uridylyl-removing (UR) activity.</text>
</comment>
<comment type="domain">
    <text evidence="1">Has four distinct domains: an N-terminal nucleotidyltransferase (NT) domain responsible for UTase activity, a central HD domain that encodes UR activity, and two C-terminal ACT domains that seem to have a role in glutamine sensing.</text>
</comment>
<comment type="similarity">
    <text evidence="1">Belongs to the GlnD family.</text>
</comment>
<keyword id="KW-0378">Hydrolase</keyword>
<keyword id="KW-0460">Magnesium</keyword>
<keyword id="KW-0511">Multifunctional enzyme</keyword>
<keyword id="KW-0548">Nucleotidyltransferase</keyword>
<keyword id="KW-0677">Repeat</keyword>
<keyword id="KW-0808">Transferase</keyword>
<sequence length="887" mass="102102">MINTSPLLNYVSSHHDIKAINQWRTDVEKQLQDSYENGQSIREIIKARSDLVDEALVFLWKHAELDQSKLGLFAVGGYGRREMLPYSDVDIMILSEDEISEENEKRISTFISSLWDVGNFKPGISVRTIQSCVEQAATDLTVATTLIEARLITGNTQLAKWPRRIVSQTWTDKTFYDAKMAEQAKRYHQHNNTESNLEPDIKNAPGGIRDINQIGWIAKRHFRVNRIYDLVHLGFISEFELAVLEEAESFLWEIRHHLHRLAKRDENRLLFDHQREIAAKFGYVRQEGQPVNYGVEQFMKRYYRTAQQVSTLNEMLLAYFSESVITPRLPNYERKIEVVNDHFKIVDNKLAVQHHKIFAEHPSAILELFYILANRPDIEGIRARTLRLLILAAKRINQSYRDNPEHQALFMSIIRSPYRLYDTLVAMKRYGVLGNYIPAFGQIMGLMQYDLFHIYTVDAHTLLLLRNLNRFREPEFAKEFPVVSSVFQRLARQDIVFIAALFHDIAKGRGGDHSELGAEDAIEFGRAHGFTERECKLIAWLIQNHLLMSLTAQKKDISDPDVVKDFAEKLGDMEHLDYLYTLTVADINATNPKLWNTWRASLMRQLYTHARDVIRTGLGRPVDYQMLIEDTKFAASELLVNNFALADVEKVWQELGDEYFIKESADEIAWHTQAILKHGDNPEPLVLLRAHRKAAQDAVQIFIYTRDQPNLFATTVAVLDRMNLDVQDAKIITASTAFSLDTYVVLDRFGTLLTDPEREETVKNALVKALSQPDQYPGLMQRRIPRQLRHFDIENTVDVTLNEALQQNMVEISTLDHPGLLARVGGLFMMQGLDIHSARIATLGERAEDIFFVTKKDGKPLNNEEVKLFSEKLKAALDEASNQICQH</sequence>
<proteinExistence type="inferred from homology"/>
<feature type="chain" id="PRO_1000119361" description="Bifunctional uridylyltransferase/uridylyl-removing enzyme">
    <location>
        <begin position="1"/>
        <end position="887"/>
    </location>
</feature>
<feature type="domain" description="HD" evidence="2">
    <location>
        <begin position="457"/>
        <end position="579"/>
    </location>
</feature>
<feature type="domain" description="ACT 1" evidence="1">
    <location>
        <begin position="700"/>
        <end position="782"/>
    </location>
</feature>
<feature type="domain" description="ACT 2" evidence="1">
    <location>
        <begin position="809"/>
        <end position="887"/>
    </location>
</feature>
<feature type="region of interest" description="Uridylyltransferase">
    <location>
        <begin position="1"/>
        <end position="337"/>
    </location>
</feature>
<feature type="region of interest" description="Uridylyl-removing">
    <location>
        <begin position="339"/>
        <end position="699"/>
    </location>
</feature>
<evidence type="ECO:0000255" key="1">
    <source>
        <dbReference type="HAMAP-Rule" id="MF_00277"/>
    </source>
</evidence>
<evidence type="ECO:0000255" key="2">
    <source>
        <dbReference type="PROSITE-ProRule" id="PRU01175"/>
    </source>
</evidence>
<accession>B7I420</accession>